<organism>
    <name type="scientific">Arabidopsis thaliana</name>
    <name type="common">Mouse-ear cress</name>
    <dbReference type="NCBI Taxonomy" id="3702"/>
    <lineage>
        <taxon>Eukaryota</taxon>
        <taxon>Viridiplantae</taxon>
        <taxon>Streptophyta</taxon>
        <taxon>Embryophyta</taxon>
        <taxon>Tracheophyta</taxon>
        <taxon>Spermatophyta</taxon>
        <taxon>Magnoliopsida</taxon>
        <taxon>eudicotyledons</taxon>
        <taxon>Gunneridae</taxon>
        <taxon>Pentapetalae</taxon>
        <taxon>rosids</taxon>
        <taxon>malvids</taxon>
        <taxon>Brassicales</taxon>
        <taxon>Brassicaceae</taxon>
        <taxon>Camelineae</taxon>
        <taxon>Arabidopsis</taxon>
    </lineage>
</organism>
<proteinExistence type="evidence at protein level"/>
<protein>
    <recommendedName>
        <fullName evidence="6">E3 ubiquitin-protein ligase RZF1</fullName>
        <ecNumber evidence="4">2.3.2.27</ecNumber>
    </recommendedName>
    <alternativeName>
        <fullName evidence="6">RING-H2 zinc finger protein 1</fullName>
        <shortName evidence="6">AtRZF1</shortName>
    </alternativeName>
</protein>
<accession>Q94AK4</accession>
<accession>Q9LXY2</accession>
<dbReference type="EC" id="2.3.2.27" evidence="4"/>
<dbReference type="EMBL" id="DQ059114">
    <property type="protein sequence ID" value="AAY57600.1"/>
    <property type="molecule type" value="mRNA"/>
</dbReference>
<dbReference type="EMBL" id="AL163972">
    <property type="protein sequence ID" value="CAB88061.1"/>
    <property type="status" value="ALT_SEQ"/>
    <property type="molecule type" value="Genomic_DNA"/>
</dbReference>
<dbReference type="EMBL" id="CP002686">
    <property type="protein sequence ID" value="AEE79537.1"/>
    <property type="molecule type" value="Genomic_DNA"/>
</dbReference>
<dbReference type="EMBL" id="CP002686">
    <property type="protein sequence ID" value="AEE79538.1"/>
    <property type="molecule type" value="Genomic_DNA"/>
</dbReference>
<dbReference type="EMBL" id="CP002686">
    <property type="protein sequence ID" value="AEE79539.1"/>
    <property type="molecule type" value="Genomic_DNA"/>
</dbReference>
<dbReference type="EMBL" id="AY045983">
    <property type="protein sequence ID" value="AAK76657.1"/>
    <property type="molecule type" value="mRNA"/>
</dbReference>
<dbReference type="EMBL" id="AY096613">
    <property type="protein sequence ID" value="AAM20263.1"/>
    <property type="molecule type" value="mRNA"/>
</dbReference>
<dbReference type="PIR" id="T49059">
    <property type="entry name" value="T49059"/>
</dbReference>
<dbReference type="RefSeq" id="NP_001030874.1">
    <property type="nucleotide sequence ID" value="NM_001035797.1"/>
</dbReference>
<dbReference type="RefSeq" id="NP_567039.1">
    <property type="nucleotide sequence ID" value="NM_115516.3"/>
</dbReference>
<dbReference type="RefSeq" id="NP_974448.1">
    <property type="nucleotide sequence ID" value="NM_202719.1"/>
</dbReference>
<dbReference type="SMR" id="Q94AK4"/>
<dbReference type="FunCoup" id="Q94AK4">
    <property type="interactions" value="3463"/>
</dbReference>
<dbReference type="STRING" id="3702.Q94AK4"/>
<dbReference type="PaxDb" id="3702-AT3G56580.1"/>
<dbReference type="EnsemblPlants" id="AT3G56580.1">
    <property type="protein sequence ID" value="AT3G56580.1"/>
    <property type="gene ID" value="AT3G56580"/>
</dbReference>
<dbReference type="EnsemblPlants" id="AT3G56580.2">
    <property type="protein sequence ID" value="AT3G56580.2"/>
    <property type="gene ID" value="AT3G56580"/>
</dbReference>
<dbReference type="EnsemblPlants" id="AT3G56580.3">
    <property type="protein sequence ID" value="AT3G56580.3"/>
    <property type="gene ID" value="AT3G56580"/>
</dbReference>
<dbReference type="GeneID" id="824825"/>
<dbReference type="Gramene" id="AT3G56580.1">
    <property type="protein sequence ID" value="AT3G56580.1"/>
    <property type="gene ID" value="AT3G56580"/>
</dbReference>
<dbReference type="Gramene" id="AT3G56580.2">
    <property type="protein sequence ID" value="AT3G56580.2"/>
    <property type="gene ID" value="AT3G56580"/>
</dbReference>
<dbReference type="Gramene" id="AT3G56580.3">
    <property type="protein sequence ID" value="AT3G56580.3"/>
    <property type="gene ID" value="AT3G56580"/>
</dbReference>
<dbReference type="KEGG" id="ath:AT3G56580"/>
<dbReference type="Araport" id="AT3G56580"/>
<dbReference type="TAIR" id="AT3G56580">
    <property type="gene designation" value="RZF1"/>
</dbReference>
<dbReference type="eggNOG" id="KOG0800">
    <property type="taxonomic scope" value="Eukaryota"/>
</dbReference>
<dbReference type="HOGENOM" id="CLU_034892_1_2_1"/>
<dbReference type="InParanoid" id="Q94AK4"/>
<dbReference type="OMA" id="SDPCERK"/>
<dbReference type="OrthoDB" id="8062037at2759"/>
<dbReference type="PhylomeDB" id="Q94AK4"/>
<dbReference type="PRO" id="PR:Q94AK4"/>
<dbReference type="Proteomes" id="UP000006548">
    <property type="component" value="Chromosome 3"/>
</dbReference>
<dbReference type="ExpressionAtlas" id="Q94AK4">
    <property type="expression patterns" value="baseline and differential"/>
</dbReference>
<dbReference type="GO" id="GO:0061630">
    <property type="term" value="F:ubiquitin protein ligase activity"/>
    <property type="evidence" value="ECO:0007669"/>
    <property type="project" value="InterPro"/>
</dbReference>
<dbReference type="GO" id="GO:0004842">
    <property type="term" value="F:ubiquitin-protein transferase activity"/>
    <property type="evidence" value="ECO:0000314"/>
    <property type="project" value="TAIR"/>
</dbReference>
<dbReference type="GO" id="GO:0008270">
    <property type="term" value="F:zinc ion binding"/>
    <property type="evidence" value="ECO:0007669"/>
    <property type="project" value="UniProtKB-KW"/>
</dbReference>
<dbReference type="GO" id="GO:0009738">
    <property type="term" value="P:abscisic acid-activated signaling pathway"/>
    <property type="evidence" value="ECO:0007669"/>
    <property type="project" value="UniProtKB-KW"/>
</dbReference>
<dbReference type="GO" id="GO:1902006">
    <property type="term" value="P:negative regulation of proline biosynthetic process"/>
    <property type="evidence" value="ECO:0000315"/>
    <property type="project" value="TAIR"/>
</dbReference>
<dbReference type="GO" id="GO:0047484">
    <property type="term" value="P:regulation of response to osmotic stress"/>
    <property type="evidence" value="ECO:0000315"/>
    <property type="project" value="UniProtKB"/>
</dbReference>
<dbReference type="GO" id="GO:0006970">
    <property type="term" value="P:response to osmotic stress"/>
    <property type="evidence" value="ECO:0000270"/>
    <property type="project" value="UniProtKB"/>
</dbReference>
<dbReference type="GO" id="GO:0009414">
    <property type="term" value="P:response to water deprivation"/>
    <property type="evidence" value="ECO:0000270"/>
    <property type="project" value="TAIR"/>
</dbReference>
<dbReference type="CDD" id="cd16667">
    <property type="entry name" value="RING-H2_RNF126-like"/>
    <property type="match status" value="1"/>
</dbReference>
<dbReference type="FunFam" id="3.30.40.10:FF:000022">
    <property type="entry name" value="E3 ubiquitin-protein ligase RING1-like"/>
    <property type="match status" value="1"/>
</dbReference>
<dbReference type="Gene3D" id="3.30.40.10">
    <property type="entry name" value="Zinc/RING finger domain, C3HC4 (zinc finger)"/>
    <property type="match status" value="1"/>
</dbReference>
<dbReference type="InterPro" id="IPR039525">
    <property type="entry name" value="RNF126-like_zinc-ribbon"/>
</dbReference>
<dbReference type="InterPro" id="IPR001841">
    <property type="entry name" value="Znf_RING"/>
</dbReference>
<dbReference type="InterPro" id="IPR013083">
    <property type="entry name" value="Znf_RING/FYVE/PHD"/>
</dbReference>
<dbReference type="PANTHER" id="PTHR15710">
    <property type="entry name" value="E3 UBIQUITIN-PROTEIN LIGASE PRAJA"/>
    <property type="match status" value="1"/>
</dbReference>
<dbReference type="PANTHER" id="PTHR15710:SF47">
    <property type="entry name" value="E3 UBIQUITIN-PROTEIN LIGASE RZF1"/>
    <property type="match status" value="1"/>
</dbReference>
<dbReference type="Pfam" id="PF13639">
    <property type="entry name" value="zf-RING_2"/>
    <property type="match status" value="1"/>
</dbReference>
<dbReference type="Pfam" id="PF14369">
    <property type="entry name" value="Zn_ribbon_19"/>
    <property type="match status" value="1"/>
</dbReference>
<dbReference type="SMART" id="SM00184">
    <property type="entry name" value="RING"/>
    <property type="match status" value="1"/>
</dbReference>
<dbReference type="SUPFAM" id="SSF57850">
    <property type="entry name" value="RING/U-box"/>
    <property type="match status" value="1"/>
</dbReference>
<dbReference type="PROSITE" id="PS50089">
    <property type="entry name" value="ZF_RING_2"/>
    <property type="match status" value="1"/>
</dbReference>
<comment type="function">
    <text evidence="4 5">E3 ubiquitin-protein ligase that promotes osmotic stress and abscisic acid (ABA) responses (PubMed:23415322). Negatively regulates drought-mediated control of early seedling development, probably by influencing proline content, water loss, membrane ion leakage and the expression of dehydration stress-related genes (e.g. RAB18, RD29A, RD29B, AOX1A, ERD15, ERD1, COR15A, P5CS1 and P5CR) (PubMed:23415322, PubMed:28369480). Modulates bZIP11 accumulation during rehydration following drought (PubMed:28369480).</text>
</comment>
<comment type="catalytic activity">
    <reaction evidence="4">
        <text>S-ubiquitinyl-[E2 ubiquitin-conjugating enzyme]-L-cysteine + [acceptor protein]-L-lysine = [E2 ubiquitin-conjugating enzyme]-L-cysteine + N(6)-ubiquitinyl-[acceptor protein]-L-lysine.</text>
        <dbReference type="EC" id="2.3.2.27"/>
    </reaction>
</comment>
<comment type="tissue specificity">
    <text evidence="4">Expressed in seedlings and in flowers.</text>
</comment>
<comment type="developmental stage">
    <text evidence="4 5">In seedlings, especially present in the vascular system (PubMed:23415322, PubMed:28369480). In flowers, observed in sepals, anthers of stamen, and pollen (PubMed:23415322).</text>
</comment>
<comment type="induction">
    <text evidence="4">Repressed by drought and osmotic (e.g. 400 mM mannitol) stresses.</text>
</comment>
<comment type="disruption phenotype">
    <text evidence="4 5">Reduced sensitivity to osmotic stress, dehydration and abscisic acid (ABA) during early seedling development (PubMed:23415322, PubMed:28369480). Increased proline accumulation and higher expression of stress-related genes (e.g. RAB18, RD29A, RD29B, AOX1A, ERD15, ERD1, COR15A, P5CS1 and P5CR) under drought stress (PubMed:23415322). Lower production of malondialdehyde (MDA) upon drought stress (PubMed:28369480). Slightly enhanced pollen tube growth (PubMed:28369480). Impaired bZIP11 accumulation after rehydration following drought (PubMed:28369480).</text>
</comment>
<comment type="sequence caution" evidence="7">
    <conflict type="erroneous gene model prediction">
        <sequence resource="EMBL-CDS" id="CAB88061"/>
    </conflict>
</comment>
<feature type="initiator methionine" description="Removed" evidence="1">
    <location>
        <position position="1"/>
    </location>
</feature>
<feature type="chain" id="PRO_0000439876" description="E3 ubiquitin-protein ligase RZF1">
    <location>
        <begin position="2"/>
        <end position="320"/>
    </location>
</feature>
<feature type="zinc finger region" description="RING-type; atypical" evidence="2">
    <location>
        <begin position="186"/>
        <end position="227"/>
    </location>
</feature>
<feature type="region of interest" description="Disordered" evidence="3">
    <location>
        <begin position="229"/>
        <end position="320"/>
    </location>
</feature>
<feature type="compositionally biased region" description="Low complexity" evidence="3">
    <location>
        <begin position="232"/>
        <end position="249"/>
    </location>
</feature>
<feature type="compositionally biased region" description="Low complexity" evidence="3">
    <location>
        <begin position="295"/>
        <end position="308"/>
    </location>
</feature>
<feature type="modified residue" description="N-acetylserine" evidence="1">
    <location>
        <position position="2"/>
    </location>
</feature>
<evidence type="ECO:0000250" key="1">
    <source>
        <dbReference type="UniProtKB" id="Q8LPN7"/>
    </source>
</evidence>
<evidence type="ECO:0000255" key="2">
    <source>
        <dbReference type="PROSITE-ProRule" id="PRU00175"/>
    </source>
</evidence>
<evidence type="ECO:0000256" key="3">
    <source>
        <dbReference type="SAM" id="MobiDB-lite"/>
    </source>
</evidence>
<evidence type="ECO:0000269" key="4">
    <source>
    </source>
</evidence>
<evidence type="ECO:0000269" key="5">
    <source>
    </source>
</evidence>
<evidence type="ECO:0000303" key="6">
    <source>
    </source>
</evidence>
<evidence type="ECO:0000305" key="7"/>
<evidence type="ECO:0000312" key="8">
    <source>
        <dbReference type="Araport" id="AT3G56580"/>
    </source>
</evidence>
<evidence type="ECO:0000312" key="9">
    <source>
        <dbReference type="EMBL" id="CAB88061.1"/>
    </source>
</evidence>
<reference key="1">
    <citation type="journal article" date="2005" name="Plant Physiol.">
        <title>Functional analysis of the RING-type ubiquitin ligase family of Arabidopsis.</title>
        <authorList>
            <person name="Stone S.L."/>
            <person name="Hauksdottir H."/>
            <person name="Troy A."/>
            <person name="Herschleb J."/>
            <person name="Kraft E."/>
            <person name="Callis J."/>
        </authorList>
    </citation>
    <scope>NUCLEOTIDE SEQUENCE [MRNA]</scope>
    <source>
        <strain>cv. Columbia</strain>
        <tissue>Leaf</tissue>
    </source>
</reference>
<reference key="2">
    <citation type="journal article" date="2000" name="Nature">
        <title>Sequence and analysis of chromosome 3 of the plant Arabidopsis thaliana.</title>
        <authorList>
            <person name="Salanoubat M."/>
            <person name="Lemcke K."/>
            <person name="Rieger M."/>
            <person name="Ansorge W."/>
            <person name="Unseld M."/>
            <person name="Fartmann B."/>
            <person name="Valle G."/>
            <person name="Bloecker H."/>
            <person name="Perez-Alonso M."/>
            <person name="Obermaier B."/>
            <person name="Delseny M."/>
            <person name="Boutry M."/>
            <person name="Grivell L.A."/>
            <person name="Mache R."/>
            <person name="Puigdomenech P."/>
            <person name="De Simone V."/>
            <person name="Choisne N."/>
            <person name="Artiguenave F."/>
            <person name="Robert C."/>
            <person name="Brottier P."/>
            <person name="Wincker P."/>
            <person name="Cattolico L."/>
            <person name="Weissenbach J."/>
            <person name="Saurin W."/>
            <person name="Quetier F."/>
            <person name="Schaefer M."/>
            <person name="Mueller-Auer S."/>
            <person name="Gabel C."/>
            <person name="Fuchs M."/>
            <person name="Benes V."/>
            <person name="Wurmbach E."/>
            <person name="Drzonek H."/>
            <person name="Erfle H."/>
            <person name="Jordan N."/>
            <person name="Bangert S."/>
            <person name="Wiedelmann R."/>
            <person name="Kranz H."/>
            <person name="Voss H."/>
            <person name="Holland R."/>
            <person name="Brandt P."/>
            <person name="Nyakatura G."/>
            <person name="Vezzi A."/>
            <person name="D'Angelo M."/>
            <person name="Pallavicini A."/>
            <person name="Toppo S."/>
            <person name="Simionati B."/>
            <person name="Conrad A."/>
            <person name="Hornischer K."/>
            <person name="Kauer G."/>
            <person name="Loehnert T.-H."/>
            <person name="Nordsiek G."/>
            <person name="Reichelt J."/>
            <person name="Scharfe M."/>
            <person name="Schoen O."/>
            <person name="Bargues M."/>
            <person name="Terol J."/>
            <person name="Climent J."/>
            <person name="Navarro P."/>
            <person name="Collado C."/>
            <person name="Perez-Perez A."/>
            <person name="Ottenwaelder B."/>
            <person name="Duchemin D."/>
            <person name="Cooke R."/>
            <person name="Laudie M."/>
            <person name="Berger-Llauro C."/>
            <person name="Purnelle B."/>
            <person name="Masuy D."/>
            <person name="de Haan M."/>
            <person name="Maarse A.C."/>
            <person name="Alcaraz J.-P."/>
            <person name="Cottet A."/>
            <person name="Casacuberta E."/>
            <person name="Monfort A."/>
            <person name="Argiriou A."/>
            <person name="Flores M."/>
            <person name="Liguori R."/>
            <person name="Vitale D."/>
            <person name="Mannhaupt G."/>
            <person name="Haase D."/>
            <person name="Schoof H."/>
            <person name="Rudd S."/>
            <person name="Zaccaria P."/>
            <person name="Mewes H.-W."/>
            <person name="Mayer K.F.X."/>
            <person name="Kaul S."/>
            <person name="Town C.D."/>
            <person name="Koo H.L."/>
            <person name="Tallon L.J."/>
            <person name="Jenkins J."/>
            <person name="Rooney T."/>
            <person name="Rizzo M."/>
            <person name="Walts A."/>
            <person name="Utterback T."/>
            <person name="Fujii C.Y."/>
            <person name="Shea T.P."/>
            <person name="Creasy T.H."/>
            <person name="Haas B."/>
            <person name="Maiti R."/>
            <person name="Wu D."/>
            <person name="Peterson J."/>
            <person name="Van Aken S."/>
            <person name="Pai G."/>
            <person name="Militscher J."/>
            <person name="Sellers P."/>
            <person name="Gill J.E."/>
            <person name="Feldblyum T.V."/>
            <person name="Preuss D."/>
            <person name="Lin X."/>
            <person name="Nierman W.C."/>
            <person name="Salzberg S.L."/>
            <person name="White O."/>
            <person name="Venter J.C."/>
            <person name="Fraser C.M."/>
            <person name="Kaneko T."/>
            <person name="Nakamura Y."/>
            <person name="Sato S."/>
            <person name="Kato T."/>
            <person name="Asamizu E."/>
            <person name="Sasamoto S."/>
            <person name="Kimura T."/>
            <person name="Idesawa K."/>
            <person name="Kawashima K."/>
            <person name="Kishida Y."/>
            <person name="Kiyokawa C."/>
            <person name="Kohara M."/>
            <person name="Matsumoto M."/>
            <person name="Matsuno A."/>
            <person name="Muraki A."/>
            <person name="Nakayama S."/>
            <person name="Nakazaki N."/>
            <person name="Shinpo S."/>
            <person name="Takeuchi C."/>
            <person name="Wada T."/>
            <person name="Watanabe A."/>
            <person name="Yamada M."/>
            <person name="Yasuda M."/>
            <person name="Tabata S."/>
        </authorList>
    </citation>
    <scope>NUCLEOTIDE SEQUENCE [LARGE SCALE GENOMIC DNA]</scope>
    <source>
        <strain>cv. Columbia</strain>
    </source>
</reference>
<reference key="3">
    <citation type="journal article" date="2017" name="Plant J.">
        <title>Araport11: a complete reannotation of the Arabidopsis thaliana reference genome.</title>
        <authorList>
            <person name="Cheng C.Y."/>
            <person name="Krishnakumar V."/>
            <person name="Chan A.P."/>
            <person name="Thibaud-Nissen F."/>
            <person name="Schobel S."/>
            <person name="Town C.D."/>
        </authorList>
    </citation>
    <scope>GENOME REANNOTATION</scope>
    <source>
        <strain>cv. Columbia</strain>
    </source>
</reference>
<reference key="4">
    <citation type="journal article" date="2003" name="Science">
        <title>Empirical analysis of transcriptional activity in the Arabidopsis genome.</title>
        <authorList>
            <person name="Yamada K."/>
            <person name="Lim J."/>
            <person name="Dale J.M."/>
            <person name="Chen H."/>
            <person name="Shinn P."/>
            <person name="Palm C.J."/>
            <person name="Southwick A.M."/>
            <person name="Wu H.C."/>
            <person name="Kim C.J."/>
            <person name="Nguyen M."/>
            <person name="Pham P.K."/>
            <person name="Cheuk R.F."/>
            <person name="Karlin-Newmann G."/>
            <person name="Liu S.X."/>
            <person name="Lam B."/>
            <person name="Sakano H."/>
            <person name="Wu T."/>
            <person name="Yu G."/>
            <person name="Miranda M."/>
            <person name="Quach H.L."/>
            <person name="Tripp M."/>
            <person name="Chang C.H."/>
            <person name="Lee J.M."/>
            <person name="Toriumi M.J."/>
            <person name="Chan M.M."/>
            <person name="Tang C.C."/>
            <person name="Onodera C.S."/>
            <person name="Deng J.M."/>
            <person name="Akiyama K."/>
            <person name="Ansari Y."/>
            <person name="Arakawa T."/>
            <person name="Banh J."/>
            <person name="Banno F."/>
            <person name="Bowser L."/>
            <person name="Brooks S.Y."/>
            <person name="Carninci P."/>
            <person name="Chao Q."/>
            <person name="Choy N."/>
            <person name="Enju A."/>
            <person name="Goldsmith A.D."/>
            <person name="Gurjal M."/>
            <person name="Hansen N.F."/>
            <person name="Hayashizaki Y."/>
            <person name="Johnson-Hopson C."/>
            <person name="Hsuan V.W."/>
            <person name="Iida K."/>
            <person name="Karnes M."/>
            <person name="Khan S."/>
            <person name="Koesema E."/>
            <person name="Ishida J."/>
            <person name="Jiang P.X."/>
            <person name="Jones T."/>
            <person name="Kawai J."/>
            <person name="Kamiya A."/>
            <person name="Meyers C."/>
            <person name="Nakajima M."/>
            <person name="Narusaka M."/>
            <person name="Seki M."/>
            <person name="Sakurai T."/>
            <person name="Satou M."/>
            <person name="Tamse R."/>
            <person name="Vaysberg M."/>
            <person name="Wallender E.K."/>
            <person name="Wong C."/>
            <person name="Yamamura Y."/>
            <person name="Yuan S."/>
            <person name="Shinozaki K."/>
            <person name="Davis R.W."/>
            <person name="Theologis A."/>
            <person name="Ecker J.R."/>
        </authorList>
    </citation>
    <scope>NUCLEOTIDE SEQUENCE [LARGE SCALE MRNA]</scope>
    <source>
        <strain>cv. Columbia</strain>
    </source>
</reference>
<reference key="5">
    <citation type="journal article" date="2013" name="Plant Sci.">
        <title>The atrzf1 mutation of the novel RING-type E3 ubiquitin ligase increases proline contents and enhances drought tolerance in Arabidopsis.</title>
        <authorList>
            <person name="Ju H.-W."/>
            <person name="Min J.-H."/>
            <person name="Chung M.-S."/>
            <person name="Kim C.S."/>
        </authorList>
    </citation>
    <scope>FUNCTION</scope>
    <scope>DISRUPTION PHENOTYPE</scope>
    <scope>CATALYTIC ACTIVITY</scope>
    <scope>TISSUE SPECIFICITY</scope>
    <scope>DEVELOPMENTAL STAGE</scope>
    <scope>REPRESSION BY DROUGHT AND OSMOTIC STRESS</scope>
    <source>
        <strain>cv. Columbia</strain>
    </source>
</reference>
<reference key="6">
    <citation type="journal article" date="2017" name="J. Exp. Bot.">
        <title>PCA22 acts as a suppressor of atrzf1 to mediate proline accumulation in response to abiotic stress in Arabidopsis.</title>
        <authorList>
            <person name="Kim A.-R."/>
            <person name="Min J.-H."/>
            <person name="Lee K.-H."/>
            <person name="Kim C.S."/>
        </authorList>
    </citation>
    <scope>FUNCTION</scope>
    <scope>DISRUPTION PHENOTYPE</scope>
    <source>
        <strain>cv. Columbia</strain>
    </source>
</reference>
<keyword id="KW-0938">Abscisic acid signaling pathway</keyword>
<keyword id="KW-0007">Acetylation</keyword>
<keyword id="KW-0479">Metal-binding</keyword>
<keyword id="KW-1185">Reference proteome</keyword>
<keyword id="KW-0346">Stress response</keyword>
<keyword id="KW-0808">Transferase</keyword>
<keyword id="KW-0833">Ubl conjugation pathway</keyword>
<keyword id="KW-0862">Zinc</keyword>
<keyword id="KW-0863">Zinc-finger</keyword>
<gene>
    <name evidence="6" type="primary">RZF1</name>
    <name evidence="8" type="ordered locus">At3g56580</name>
    <name evidence="9" type="ORF">T5P19.230</name>
</gene>
<sequence>MSSIRNTHWCHRCQRAVWLRARDAVCSYCGGGFVEEIDIGPSRAHRDVERDPTFDLMEAFSAFMRSRLAERSYDREISGRLGSAGSESFSNLAPLLIFGGQAPFRLAGGDNSSVEAFVNGAAPGIGIARGTNAGDYFFGPGLEELIEQLSSGTHHRGPPPAPKSSIDALPTIKITQKHLKSSDSHCPVCKDEFELKSEAKQMPCHHIYHSDCIVPWLVQHNSCPVCRKELPSRGSSSSTQSSQNRSTNGRENSRRRNIFSNLWPFRSSSSSSTQNRRDTNNTATAEEGHYHHHQQQQQQHQHQHQQQQSHMGYSGWPFDY</sequence>
<name>RZF1_ARATH</name>